<name>MURD_ALIFM</name>
<comment type="function">
    <text evidence="1">Cell wall formation. Catalyzes the addition of glutamate to the nucleotide precursor UDP-N-acetylmuramoyl-L-alanine (UMA).</text>
</comment>
<comment type="catalytic activity">
    <reaction evidence="1">
        <text>UDP-N-acetyl-alpha-D-muramoyl-L-alanine + D-glutamate + ATP = UDP-N-acetyl-alpha-D-muramoyl-L-alanyl-D-glutamate + ADP + phosphate + H(+)</text>
        <dbReference type="Rhea" id="RHEA:16429"/>
        <dbReference type="ChEBI" id="CHEBI:15378"/>
        <dbReference type="ChEBI" id="CHEBI:29986"/>
        <dbReference type="ChEBI" id="CHEBI:30616"/>
        <dbReference type="ChEBI" id="CHEBI:43474"/>
        <dbReference type="ChEBI" id="CHEBI:83898"/>
        <dbReference type="ChEBI" id="CHEBI:83900"/>
        <dbReference type="ChEBI" id="CHEBI:456216"/>
        <dbReference type="EC" id="6.3.2.9"/>
    </reaction>
</comment>
<comment type="pathway">
    <text evidence="1">Cell wall biogenesis; peptidoglycan biosynthesis.</text>
</comment>
<comment type="subcellular location">
    <subcellularLocation>
        <location evidence="1">Cytoplasm</location>
    </subcellularLocation>
</comment>
<comment type="similarity">
    <text evidence="1">Belongs to the MurCDEF family.</text>
</comment>
<evidence type="ECO:0000255" key="1">
    <source>
        <dbReference type="HAMAP-Rule" id="MF_00639"/>
    </source>
</evidence>
<protein>
    <recommendedName>
        <fullName evidence="1">UDP-N-acetylmuramoylalanine--D-glutamate ligase</fullName>
        <ecNumber evidence="1">6.3.2.9</ecNumber>
    </recommendedName>
    <alternativeName>
        <fullName evidence="1">D-glutamic acid-adding enzyme</fullName>
    </alternativeName>
    <alternativeName>
        <fullName evidence="1">UDP-N-acetylmuramoyl-L-alanyl-D-glutamate synthetase</fullName>
    </alternativeName>
</protein>
<organism>
    <name type="scientific">Aliivibrio fischeri (strain MJ11)</name>
    <name type="common">Vibrio fischeri</name>
    <dbReference type="NCBI Taxonomy" id="388396"/>
    <lineage>
        <taxon>Bacteria</taxon>
        <taxon>Pseudomonadati</taxon>
        <taxon>Pseudomonadota</taxon>
        <taxon>Gammaproteobacteria</taxon>
        <taxon>Vibrionales</taxon>
        <taxon>Vibrionaceae</taxon>
        <taxon>Aliivibrio</taxon>
    </lineage>
</organism>
<gene>
    <name evidence="1" type="primary">murD</name>
    <name type="ordered locus">VFMJ11_2315</name>
</gene>
<feature type="chain" id="PRO_1000130882" description="UDP-N-acetylmuramoylalanine--D-glutamate ligase">
    <location>
        <begin position="1"/>
        <end position="440"/>
    </location>
</feature>
<feature type="binding site" evidence="1">
    <location>
        <begin position="115"/>
        <end position="121"/>
    </location>
    <ligand>
        <name>ATP</name>
        <dbReference type="ChEBI" id="CHEBI:30616"/>
    </ligand>
</feature>
<accession>B5FB37</accession>
<reference key="1">
    <citation type="submission" date="2008-08" db="EMBL/GenBank/DDBJ databases">
        <title>Complete sequence of Vibrio fischeri strain MJ11.</title>
        <authorList>
            <person name="Mandel M.J."/>
            <person name="Stabb E.V."/>
            <person name="Ruby E.G."/>
            <person name="Ferriera S."/>
            <person name="Johnson J."/>
            <person name="Kravitz S."/>
            <person name="Beeson K."/>
            <person name="Sutton G."/>
            <person name="Rogers Y.-H."/>
            <person name="Friedman R."/>
            <person name="Frazier M."/>
            <person name="Venter J.C."/>
        </authorList>
    </citation>
    <scope>NUCLEOTIDE SEQUENCE [LARGE SCALE GENOMIC DNA]</scope>
    <source>
        <strain>MJ11</strain>
    </source>
</reference>
<proteinExistence type="inferred from homology"/>
<sequence length="440" mass="47286">MSGFGGVKNVVVVGLGMTGLSVVKHLLRQPEALTIKVIDTRDTPPGHDQLPENVELHSGGWQQDWLINADLIVTNPGIALASPQLKPAIDKGIQIVGDIELFAWAVNAPVIAITGSNGKSTVTDLTGEMAKAAGVKTAVGGNIGFAALDLLEQDAELYVLELSSFQLETTSTLKLKAAAFLNLSEDHMDRYQGMADYRQAKLRIFDHAEVCIVNRDDKQTYPDVEKTLKSFGFDQGDYGCIEKDGIEYLAKDAMSLLAANELGLVGKHNIANSLVAIALLDAVGINLDATLDTLRTYNGLTHRCQVVADNNGIRWVNDSKATNVASTLAALSGLQLEGKLHLLVGGVGKGADFSELSPALHDLNLMMYCFGEDGDQFVSLDPRSLLCETMDEAVATLYPTLNKGDMVMLSPACASFDQYANFMARGDAFTQLAKQYSIES</sequence>
<keyword id="KW-0067">ATP-binding</keyword>
<keyword id="KW-0131">Cell cycle</keyword>
<keyword id="KW-0132">Cell division</keyword>
<keyword id="KW-0133">Cell shape</keyword>
<keyword id="KW-0961">Cell wall biogenesis/degradation</keyword>
<keyword id="KW-0963">Cytoplasm</keyword>
<keyword id="KW-0436">Ligase</keyword>
<keyword id="KW-0547">Nucleotide-binding</keyword>
<keyword id="KW-0573">Peptidoglycan synthesis</keyword>
<dbReference type="EC" id="6.3.2.9" evidence="1"/>
<dbReference type="EMBL" id="CP001139">
    <property type="protein sequence ID" value="ACH65909.1"/>
    <property type="molecule type" value="Genomic_DNA"/>
</dbReference>
<dbReference type="RefSeq" id="WP_012533363.1">
    <property type="nucleotide sequence ID" value="NC_011184.1"/>
</dbReference>
<dbReference type="SMR" id="B5FB37"/>
<dbReference type="KEGG" id="vfm:VFMJ11_2315"/>
<dbReference type="HOGENOM" id="CLU_032540_1_0_6"/>
<dbReference type="UniPathway" id="UPA00219"/>
<dbReference type="Proteomes" id="UP000001857">
    <property type="component" value="Chromosome I"/>
</dbReference>
<dbReference type="GO" id="GO:0005737">
    <property type="term" value="C:cytoplasm"/>
    <property type="evidence" value="ECO:0007669"/>
    <property type="project" value="UniProtKB-SubCell"/>
</dbReference>
<dbReference type="GO" id="GO:0005524">
    <property type="term" value="F:ATP binding"/>
    <property type="evidence" value="ECO:0007669"/>
    <property type="project" value="UniProtKB-UniRule"/>
</dbReference>
<dbReference type="GO" id="GO:0008764">
    <property type="term" value="F:UDP-N-acetylmuramoylalanine-D-glutamate ligase activity"/>
    <property type="evidence" value="ECO:0007669"/>
    <property type="project" value="UniProtKB-UniRule"/>
</dbReference>
<dbReference type="GO" id="GO:0051301">
    <property type="term" value="P:cell division"/>
    <property type="evidence" value="ECO:0007669"/>
    <property type="project" value="UniProtKB-KW"/>
</dbReference>
<dbReference type="GO" id="GO:0071555">
    <property type="term" value="P:cell wall organization"/>
    <property type="evidence" value="ECO:0007669"/>
    <property type="project" value="UniProtKB-KW"/>
</dbReference>
<dbReference type="GO" id="GO:0009252">
    <property type="term" value="P:peptidoglycan biosynthetic process"/>
    <property type="evidence" value="ECO:0007669"/>
    <property type="project" value="UniProtKB-UniRule"/>
</dbReference>
<dbReference type="GO" id="GO:0008360">
    <property type="term" value="P:regulation of cell shape"/>
    <property type="evidence" value="ECO:0007669"/>
    <property type="project" value="UniProtKB-KW"/>
</dbReference>
<dbReference type="Gene3D" id="3.90.190.20">
    <property type="entry name" value="Mur ligase, C-terminal domain"/>
    <property type="match status" value="1"/>
</dbReference>
<dbReference type="Gene3D" id="3.40.1190.10">
    <property type="entry name" value="Mur-like, catalytic domain"/>
    <property type="match status" value="1"/>
</dbReference>
<dbReference type="Gene3D" id="3.40.50.720">
    <property type="entry name" value="NAD(P)-binding Rossmann-like Domain"/>
    <property type="match status" value="1"/>
</dbReference>
<dbReference type="HAMAP" id="MF_00639">
    <property type="entry name" value="MurD"/>
    <property type="match status" value="1"/>
</dbReference>
<dbReference type="InterPro" id="IPR036565">
    <property type="entry name" value="Mur-like_cat_sf"/>
</dbReference>
<dbReference type="InterPro" id="IPR004101">
    <property type="entry name" value="Mur_ligase_C"/>
</dbReference>
<dbReference type="InterPro" id="IPR036615">
    <property type="entry name" value="Mur_ligase_C_dom_sf"/>
</dbReference>
<dbReference type="InterPro" id="IPR013221">
    <property type="entry name" value="Mur_ligase_cen"/>
</dbReference>
<dbReference type="InterPro" id="IPR005762">
    <property type="entry name" value="MurD"/>
</dbReference>
<dbReference type="NCBIfam" id="TIGR01087">
    <property type="entry name" value="murD"/>
    <property type="match status" value="1"/>
</dbReference>
<dbReference type="PANTHER" id="PTHR43692">
    <property type="entry name" value="UDP-N-ACETYLMURAMOYLALANINE--D-GLUTAMATE LIGASE"/>
    <property type="match status" value="1"/>
</dbReference>
<dbReference type="PANTHER" id="PTHR43692:SF1">
    <property type="entry name" value="UDP-N-ACETYLMURAMOYLALANINE--D-GLUTAMATE LIGASE"/>
    <property type="match status" value="1"/>
</dbReference>
<dbReference type="Pfam" id="PF02875">
    <property type="entry name" value="Mur_ligase_C"/>
    <property type="match status" value="1"/>
</dbReference>
<dbReference type="Pfam" id="PF08245">
    <property type="entry name" value="Mur_ligase_M"/>
    <property type="match status" value="1"/>
</dbReference>
<dbReference type="Pfam" id="PF21799">
    <property type="entry name" value="MurD-like_N"/>
    <property type="match status" value="1"/>
</dbReference>
<dbReference type="SUPFAM" id="SSF51984">
    <property type="entry name" value="MurCD N-terminal domain"/>
    <property type="match status" value="1"/>
</dbReference>
<dbReference type="SUPFAM" id="SSF53623">
    <property type="entry name" value="MurD-like peptide ligases, catalytic domain"/>
    <property type="match status" value="1"/>
</dbReference>
<dbReference type="SUPFAM" id="SSF53244">
    <property type="entry name" value="MurD-like peptide ligases, peptide-binding domain"/>
    <property type="match status" value="1"/>
</dbReference>